<evidence type="ECO:0000255" key="1">
    <source>
        <dbReference type="HAMAP-Rule" id="MF_00111"/>
    </source>
</evidence>
<name>MURA_CHLCH</name>
<accession>Q3AR32</accession>
<proteinExistence type="inferred from homology"/>
<organism>
    <name type="scientific">Chlorobium chlorochromatii (strain CaD3)</name>
    <dbReference type="NCBI Taxonomy" id="340177"/>
    <lineage>
        <taxon>Bacteria</taxon>
        <taxon>Pseudomonadati</taxon>
        <taxon>Chlorobiota</taxon>
        <taxon>Chlorobiia</taxon>
        <taxon>Chlorobiales</taxon>
        <taxon>Chlorobiaceae</taxon>
        <taxon>Chlorobium/Pelodictyon group</taxon>
        <taxon>Chlorobium</taxon>
    </lineage>
</organism>
<sequence>MNKLVIQGGRPLSGTLTASGSKNTSLPIIAATLLHGGGTFTLHRIPNLQDIDTFRQLLHHLGAESSLENNTLTISTANVNSILAPYELVKKMRASIYVLGPLLARFGHARVSLPGGCAFGPRPIDLHLMVMEKLGATITIETGFIDAVAKEGKLRGAHIHFPISSVGATGNALMAAVLAEGTTTLTNAAAEPEIETLCNFLIAMGATIRGVGTTELEIEGTSSLHAVTFNNVFDRIEAGTLLAAAAITGGDITLLEANPRHMKSVLKKFAEAGCTIETTPDSITLKSPETLLPVDVTAKPYPSFPTDMQAQWIALMTQANGTSRITDKVYHERFNHIPELNRLGAGIEIHKNQAIVHGIRKLSGGPVMSTDLRASACLVLAGLVAEGTTEVLRVYHLDRGYENIEMKLRTLGASIERQKYQEF</sequence>
<dbReference type="EC" id="2.5.1.7" evidence="1"/>
<dbReference type="EMBL" id="CP000108">
    <property type="protein sequence ID" value="ABB28543.1"/>
    <property type="molecule type" value="Genomic_DNA"/>
</dbReference>
<dbReference type="SMR" id="Q3AR32"/>
<dbReference type="STRING" id="340177.Cag_1282"/>
<dbReference type="KEGG" id="cch:Cag_1282"/>
<dbReference type="eggNOG" id="COG0766">
    <property type="taxonomic scope" value="Bacteria"/>
</dbReference>
<dbReference type="HOGENOM" id="CLU_027387_0_0_10"/>
<dbReference type="OrthoDB" id="9803760at2"/>
<dbReference type="UniPathway" id="UPA00219"/>
<dbReference type="GO" id="GO:0005737">
    <property type="term" value="C:cytoplasm"/>
    <property type="evidence" value="ECO:0007669"/>
    <property type="project" value="UniProtKB-SubCell"/>
</dbReference>
<dbReference type="GO" id="GO:0008760">
    <property type="term" value="F:UDP-N-acetylglucosamine 1-carboxyvinyltransferase activity"/>
    <property type="evidence" value="ECO:0007669"/>
    <property type="project" value="UniProtKB-UniRule"/>
</dbReference>
<dbReference type="GO" id="GO:0051301">
    <property type="term" value="P:cell division"/>
    <property type="evidence" value="ECO:0007669"/>
    <property type="project" value="UniProtKB-KW"/>
</dbReference>
<dbReference type="GO" id="GO:0071555">
    <property type="term" value="P:cell wall organization"/>
    <property type="evidence" value="ECO:0007669"/>
    <property type="project" value="UniProtKB-KW"/>
</dbReference>
<dbReference type="GO" id="GO:0009252">
    <property type="term" value="P:peptidoglycan biosynthetic process"/>
    <property type="evidence" value="ECO:0007669"/>
    <property type="project" value="UniProtKB-UniRule"/>
</dbReference>
<dbReference type="GO" id="GO:0008360">
    <property type="term" value="P:regulation of cell shape"/>
    <property type="evidence" value="ECO:0007669"/>
    <property type="project" value="UniProtKB-KW"/>
</dbReference>
<dbReference type="GO" id="GO:0019277">
    <property type="term" value="P:UDP-N-acetylgalactosamine biosynthetic process"/>
    <property type="evidence" value="ECO:0007669"/>
    <property type="project" value="InterPro"/>
</dbReference>
<dbReference type="CDD" id="cd01555">
    <property type="entry name" value="UdpNAET"/>
    <property type="match status" value="1"/>
</dbReference>
<dbReference type="FunFam" id="3.65.10.10:FF:000001">
    <property type="entry name" value="UDP-N-acetylglucosamine 1-carboxyvinyltransferase"/>
    <property type="match status" value="1"/>
</dbReference>
<dbReference type="Gene3D" id="3.65.10.10">
    <property type="entry name" value="Enolpyruvate transferase domain"/>
    <property type="match status" value="2"/>
</dbReference>
<dbReference type="HAMAP" id="MF_00111">
    <property type="entry name" value="MurA"/>
    <property type="match status" value="1"/>
</dbReference>
<dbReference type="InterPro" id="IPR001986">
    <property type="entry name" value="Enolpyruvate_Tfrase_dom"/>
</dbReference>
<dbReference type="InterPro" id="IPR036968">
    <property type="entry name" value="Enolpyruvate_Tfrase_sf"/>
</dbReference>
<dbReference type="InterPro" id="IPR050068">
    <property type="entry name" value="MurA_subfamily"/>
</dbReference>
<dbReference type="InterPro" id="IPR013792">
    <property type="entry name" value="RNA3'P_cycl/enolpyr_Trfase_a/b"/>
</dbReference>
<dbReference type="InterPro" id="IPR005750">
    <property type="entry name" value="UDP_GlcNAc_COvinyl_MurA"/>
</dbReference>
<dbReference type="NCBIfam" id="TIGR01072">
    <property type="entry name" value="murA"/>
    <property type="match status" value="1"/>
</dbReference>
<dbReference type="NCBIfam" id="NF006873">
    <property type="entry name" value="PRK09369.1"/>
    <property type="match status" value="1"/>
</dbReference>
<dbReference type="PANTHER" id="PTHR43783">
    <property type="entry name" value="UDP-N-ACETYLGLUCOSAMINE 1-CARBOXYVINYLTRANSFERASE"/>
    <property type="match status" value="1"/>
</dbReference>
<dbReference type="PANTHER" id="PTHR43783:SF1">
    <property type="entry name" value="UDP-N-ACETYLGLUCOSAMINE 1-CARBOXYVINYLTRANSFERASE"/>
    <property type="match status" value="1"/>
</dbReference>
<dbReference type="Pfam" id="PF00275">
    <property type="entry name" value="EPSP_synthase"/>
    <property type="match status" value="1"/>
</dbReference>
<dbReference type="SUPFAM" id="SSF55205">
    <property type="entry name" value="EPT/RTPC-like"/>
    <property type="match status" value="1"/>
</dbReference>
<reference key="1">
    <citation type="submission" date="2005-08" db="EMBL/GenBank/DDBJ databases">
        <title>Complete sequence of Chlorobium chlorochromatii CaD3.</title>
        <authorList>
            <consortium name="US DOE Joint Genome Institute"/>
            <person name="Copeland A."/>
            <person name="Lucas S."/>
            <person name="Lapidus A."/>
            <person name="Barry K."/>
            <person name="Detter J.C."/>
            <person name="Glavina T."/>
            <person name="Hammon N."/>
            <person name="Israni S."/>
            <person name="Pitluck S."/>
            <person name="Bryant D."/>
            <person name="Schmutz J."/>
            <person name="Larimer F."/>
            <person name="Land M."/>
            <person name="Kyrpides N."/>
            <person name="Ivanova N."/>
            <person name="Richardson P."/>
        </authorList>
    </citation>
    <scope>NUCLEOTIDE SEQUENCE [LARGE SCALE GENOMIC DNA]</scope>
    <source>
        <strain>CaD3</strain>
    </source>
</reference>
<keyword id="KW-0131">Cell cycle</keyword>
<keyword id="KW-0132">Cell division</keyword>
<keyword id="KW-0133">Cell shape</keyword>
<keyword id="KW-0961">Cell wall biogenesis/degradation</keyword>
<keyword id="KW-0963">Cytoplasm</keyword>
<keyword id="KW-0573">Peptidoglycan synthesis</keyword>
<keyword id="KW-0670">Pyruvate</keyword>
<keyword id="KW-0808">Transferase</keyword>
<feature type="chain" id="PRO_0000231189" description="UDP-N-acetylglucosamine 1-carboxyvinyltransferase">
    <location>
        <begin position="1"/>
        <end position="423"/>
    </location>
</feature>
<feature type="active site" description="Proton donor" evidence="1">
    <location>
        <position position="117"/>
    </location>
</feature>
<feature type="binding site" evidence="1">
    <location>
        <begin position="22"/>
        <end position="23"/>
    </location>
    <ligand>
        <name>phosphoenolpyruvate</name>
        <dbReference type="ChEBI" id="CHEBI:58702"/>
    </ligand>
</feature>
<feature type="binding site" evidence="1">
    <location>
        <position position="93"/>
    </location>
    <ligand>
        <name>UDP-N-acetyl-alpha-D-glucosamine</name>
        <dbReference type="ChEBI" id="CHEBI:57705"/>
    </ligand>
</feature>
<feature type="binding site" evidence="1">
    <location>
        <begin position="122"/>
        <end position="126"/>
    </location>
    <ligand>
        <name>UDP-N-acetyl-alpha-D-glucosamine</name>
        <dbReference type="ChEBI" id="CHEBI:57705"/>
    </ligand>
</feature>
<feature type="binding site" evidence="1">
    <location>
        <position position="307"/>
    </location>
    <ligand>
        <name>UDP-N-acetyl-alpha-D-glucosamine</name>
        <dbReference type="ChEBI" id="CHEBI:57705"/>
    </ligand>
</feature>
<feature type="binding site" evidence="1">
    <location>
        <position position="329"/>
    </location>
    <ligand>
        <name>UDP-N-acetyl-alpha-D-glucosamine</name>
        <dbReference type="ChEBI" id="CHEBI:57705"/>
    </ligand>
</feature>
<feature type="modified residue" description="2-(S-cysteinyl)pyruvic acid O-phosphothioketal" evidence="1">
    <location>
        <position position="117"/>
    </location>
</feature>
<comment type="function">
    <text evidence="1">Cell wall formation. Adds enolpyruvyl to UDP-N-acetylglucosamine.</text>
</comment>
<comment type="catalytic activity">
    <reaction evidence="1">
        <text>phosphoenolpyruvate + UDP-N-acetyl-alpha-D-glucosamine = UDP-N-acetyl-3-O-(1-carboxyvinyl)-alpha-D-glucosamine + phosphate</text>
        <dbReference type="Rhea" id="RHEA:18681"/>
        <dbReference type="ChEBI" id="CHEBI:43474"/>
        <dbReference type="ChEBI" id="CHEBI:57705"/>
        <dbReference type="ChEBI" id="CHEBI:58702"/>
        <dbReference type="ChEBI" id="CHEBI:68483"/>
        <dbReference type="EC" id="2.5.1.7"/>
    </reaction>
</comment>
<comment type="pathway">
    <text evidence="1">Cell wall biogenesis; peptidoglycan biosynthesis.</text>
</comment>
<comment type="subcellular location">
    <subcellularLocation>
        <location evidence="1">Cytoplasm</location>
    </subcellularLocation>
</comment>
<comment type="similarity">
    <text evidence="1">Belongs to the EPSP synthase family. MurA subfamily.</text>
</comment>
<gene>
    <name evidence="1" type="primary">murA</name>
    <name type="ordered locus">Cag_1282</name>
</gene>
<protein>
    <recommendedName>
        <fullName evidence="1">UDP-N-acetylglucosamine 1-carboxyvinyltransferase</fullName>
        <ecNumber evidence="1">2.5.1.7</ecNumber>
    </recommendedName>
    <alternativeName>
        <fullName evidence="1">Enoylpyruvate transferase</fullName>
    </alternativeName>
    <alternativeName>
        <fullName evidence="1">UDP-N-acetylglucosamine enolpyruvyl transferase</fullName>
        <shortName evidence="1">EPT</shortName>
    </alternativeName>
</protein>